<proteinExistence type="evidence at protein level"/>
<name>BBH2A_HETAU</name>
<protein>
    <recommendedName>
        <fullName evidence="5">U-stichotoxin-Hau2a</fullName>
        <shortName evidence="5">U-SHTX-Hau2a</shortName>
    </recommendedName>
    <alternativeName>
        <fullName evidence="5">Hau II</fullName>
    </alternativeName>
</protein>
<organism>
    <name type="scientific">Heteractis aurora</name>
    <name type="common">Banded sea anemone</name>
    <name type="synonym">Actinia aurora</name>
    <dbReference type="NCBI Taxonomy" id="478399"/>
    <lineage>
        <taxon>Eukaryota</taxon>
        <taxon>Metazoa</taxon>
        <taxon>Cnidaria</taxon>
        <taxon>Anthozoa</taxon>
        <taxon>Hexacorallia</taxon>
        <taxon>Actiniaria</taxon>
        <taxon>Stichodactylidae</taxon>
        <taxon>Heteractis</taxon>
    </lineage>
</organism>
<reference evidence="8" key="1">
    <citation type="journal article" date="2024" name="J. Venom. Anim. Toxins Incl. Trop. Dis.">
        <title>Isolation and cDNA cloning of four peptide toxins from the sea anemone Heteractis aurora.</title>
        <authorList>
            <person name="Homma T."/>
            <person name="Ishida M."/>
            <person name="Nagashima Y."/>
            <person name="Shiomi K."/>
        </authorList>
    </citation>
    <scope>NUCLEOTIDE SEQUENCE [MRNA]</scope>
    <scope>PROTEIN SEQUENCE OF 34-57; 68-91; 102-125 AND 136-159</scope>
    <scope>MASS SPECTROMETRY</scope>
    <scope>HYDROXYLATION AT PRO-39; PRO-73; PRO-107 AND PRO-141</scope>
    <scope>TOXIC DOSE</scope>
</reference>
<accession>A0A0P0UTI6</accession>
<dbReference type="EMBL" id="LC054038">
    <property type="protein sequence ID" value="BAS68533.1"/>
    <property type="molecule type" value="mRNA"/>
</dbReference>
<dbReference type="GO" id="GO:0005576">
    <property type="term" value="C:extracellular region"/>
    <property type="evidence" value="ECO:0007669"/>
    <property type="project" value="UniProtKB-SubCell"/>
</dbReference>
<dbReference type="GO" id="GO:0042151">
    <property type="term" value="C:nematocyst"/>
    <property type="evidence" value="ECO:0007669"/>
    <property type="project" value="UniProtKB-SubCell"/>
</dbReference>
<dbReference type="CDD" id="cd21873">
    <property type="entry name" value="Ugr_9a-1-like"/>
    <property type="match status" value="4"/>
</dbReference>
<keyword id="KW-0165">Cleavage on pair of basic residues</keyword>
<keyword id="KW-0903">Direct protein sequencing</keyword>
<keyword id="KW-1015">Disulfide bond</keyword>
<keyword id="KW-0379">Hydroxylation</keyword>
<keyword id="KW-0166">Nematocyst</keyword>
<keyword id="KW-0528">Neurotoxin</keyword>
<keyword id="KW-0677">Repeat</keyword>
<keyword id="KW-0964">Secreted</keyword>
<keyword id="KW-0732">Signal</keyword>
<keyword id="KW-0800">Toxin</keyword>
<evidence type="ECO:0000250" key="1">
    <source>
        <dbReference type="UniProtKB" id="P69929"/>
    </source>
</evidence>
<evidence type="ECO:0000250" key="2">
    <source>
        <dbReference type="UniProtKB" id="R4ZCU1"/>
    </source>
</evidence>
<evidence type="ECO:0000255" key="3"/>
<evidence type="ECO:0000269" key="4">
    <source>
    </source>
</evidence>
<evidence type="ECO:0000303" key="5">
    <source>
    </source>
</evidence>
<evidence type="ECO:0000305" key="6"/>
<evidence type="ECO:0000305" key="7">
    <source>
    </source>
</evidence>
<evidence type="ECO:0000312" key="8">
    <source>
        <dbReference type="EMBL" id="BAS68533.1"/>
    </source>
</evidence>
<comment type="function">
    <text evidence="4">Neurotoxin that paralyzes freshwater crabs at high concentration.</text>
</comment>
<comment type="subcellular location">
    <subcellularLocation>
        <location evidence="6">Secreted</location>
    </subcellularLocation>
    <subcellularLocation>
        <location evidence="6">Nematocyst</location>
    </subcellularLocation>
</comment>
<comment type="mass spectrometry" mass="2802.7" method="MALDI" evidence="4">
    <molecule>U-stichotoxin-Hau2a</molecule>
</comment>
<comment type="toxic dose">
    <text evidence="4">PD(50) is 2350 ug/kg when injected into the body cavity of freshwater crabs (G.dehaani).</text>
</comment>
<comment type="similarity">
    <text evidence="7">Belongs to the sea anemone BBH family.</text>
</comment>
<sequence length="174" mass="18983">MKPIFIVALLFSTCLVNAKPSINDADIKREPEPNVAVPPCGDCYQQVGNTCVRVPSLCPARKREPEPNVAVPPCGDCYQQVGNTCVRVPSLCPARKREPEPNVAVPPCGDCYQQVGNTCVRVPSLCPARKREPEPNVAVPPCGDCYQQVGNTCVRVPSLCPARKREPENQDLWS</sequence>
<feature type="signal peptide" evidence="3">
    <location>
        <begin position="1"/>
        <end position="18"/>
    </location>
</feature>
<feature type="propeptide" id="PRO_0000462069" evidence="7">
    <location>
        <begin position="19"/>
        <end position="33"/>
    </location>
</feature>
<feature type="peptide" id="PRO_5006056075" description="U-stichotoxin-Hau2a" evidence="4">
    <location>
        <begin position="34"/>
        <end position="60"/>
    </location>
</feature>
<feature type="propeptide" id="PRO_0000462070" evidence="1">
    <location>
        <begin position="61"/>
        <end position="67"/>
    </location>
</feature>
<feature type="peptide" id="PRO_0000462071" description="U-stichotoxin-Hau2a" evidence="4">
    <location>
        <begin position="68"/>
        <end position="94"/>
    </location>
</feature>
<feature type="propeptide" id="PRO_0000462072" evidence="1">
    <location>
        <begin position="95"/>
        <end position="101"/>
    </location>
</feature>
<feature type="peptide" id="PRO_0000462073" description="U-stichotoxin-Hau2a" evidence="4">
    <location>
        <begin position="102"/>
        <end position="128"/>
    </location>
</feature>
<feature type="propeptide" id="PRO_0000462074" evidence="1">
    <location>
        <begin position="129"/>
        <end position="135"/>
    </location>
</feature>
<feature type="peptide" id="PRO_0000462075" description="U-stichotoxin-Hau2a" evidence="4">
    <location>
        <begin position="136"/>
        <end position="162"/>
    </location>
</feature>
<feature type="propeptide" id="PRO_0000462076" evidence="1">
    <location>
        <begin position="163"/>
        <end position="174"/>
    </location>
</feature>
<feature type="modified residue" description="Hydroxyproline" evidence="4">
    <location>
        <position position="39"/>
    </location>
</feature>
<feature type="modified residue" description="Hydroxyproline" evidence="4">
    <location>
        <position position="73"/>
    </location>
</feature>
<feature type="modified residue" description="Hydroxyproline" evidence="4">
    <location>
        <position position="107"/>
    </location>
</feature>
<feature type="modified residue" description="Hydroxyproline" evidence="4">
    <location>
        <position position="141"/>
    </location>
</feature>
<feature type="disulfide bond" evidence="2">
    <location>
        <begin position="40"/>
        <end position="51"/>
    </location>
</feature>
<feature type="disulfide bond" evidence="2">
    <location>
        <begin position="43"/>
        <end position="58"/>
    </location>
</feature>
<feature type="disulfide bond" evidence="2">
    <location>
        <begin position="74"/>
        <end position="85"/>
    </location>
</feature>
<feature type="disulfide bond" evidence="2">
    <location>
        <begin position="77"/>
        <end position="92"/>
    </location>
</feature>
<feature type="disulfide bond" evidence="2">
    <location>
        <begin position="108"/>
        <end position="119"/>
    </location>
</feature>
<feature type="disulfide bond" evidence="2">
    <location>
        <begin position="111"/>
        <end position="126"/>
    </location>
</feature>
<feature type="disulfide bond" evidence="2">
    <location>
        <begin position="142"/>
        <end position="153"/>
    </location>
</feature>
<feature type="disulfide bond" evidence="2">
    <location>
        <begin position="145"/>
        <end position="160"/>
    </location>
</feature>
<gene>
    <name evidence="8" type="primary">HAUTX2</name>
</gene>